<keyword id="KW-1003">Cell membrane</keyword>
<keyword id="KW-0285">Flavoprotein</keyword>
<keyword id="KW-0288">FMN</keyword>
<keyword id="KW-0472">Membrane</keyword>
<keyword id="KW-0560">Oxidoreductase</keyword>
<keyword id="KW-0665">Pyrimidine biosynthesis</keyword>
<dbReference type="EC" id="1.3.5.2" evidence="1"/>
<dbReference type="EMBL" id="CP000681">
    <property type="protein sequence ID" value="ABP75915.1"/>
    <property type="molecule type" value="Genomic_DNA"/>
</dbReference>
<dbReference type="SMR" id="A4Y7I2"/>
<dbReference type="STRING" id="319224.Sputcn32_2194"/>
<dbReference type="KEGG" id="spc:Sputcn32_2194"/>
<dbReference type="eggNOG" id="COG0167">
    <property type="taxonomic scope" value="Bacteria"/>
</dbReference>
<dbReference type="HOGENOM" id="CLU_013640_2_0_6"/>
<dbReference type="UniPathway" id="UPA00070">
    <property type="reaction ID" value="UER00946"/>
</dbReference>
<dbReference type="GO" id="GO:0005737">
    <property type="term" value="C:cytoplasm"/>
    <property type="evidence" value="ECO:0007669"/>
    <property type="project" value="InterPro"/>
</dbReference>
<dbReference type="GO" id="GO:0005886">
    <property type="term" value="C:plasma membrane"/>
    <property type="evidence" value="ECO:0007669"/>
    <property type="project" value="UniProtKB-SubCell"/>
</dbReference>
<dbReference type="GO" id="GO:0106430">
    <property type="term" value="F:dihydroorotate dehydrogenase (quinone) activity"/>
    <property type="evidence" value="ECO:0007669"/>
    <property type="project" value="UniProtKB-EC"/>
</dbReference>
<dbReference type="GO" id="GO:0006207">
    <property type="term" value="P:'de novo' pyrimidine nucleobase biosynthetic process"/>
    <property type="evidence" value="ECO:0007669"/>
    <property type="project" value="InterPro"/>
</dbReference>
<dbReference type="GO" id="GO:0044205">
    <property type="term" value="P:'de novo' UMP biosynthetic process"/>
    <property type="evidence" value="ECO:0007669"/>
    <property type="project" value="UniProtKB-UniRule"/>
</dbReference>
<dbReference type="CDD" id="cd04738">
    <property type="entry name" value="DHOD_2_like"/>
    <property type="match status" value="1"/>
</dbReference>
<dbReference type="FunFam" id="3.20.20.70:FF:000028">
    <property type="entry name" value="Dihydroorotate dehydrogenase (quinone)"/>
    <property type="match status" value="1"/>
</dbReference>
<dbReference type="Gene3D" id="3.20.20.70">
    <property type="entry name" value="Aldolase class I"/>
    <property type="match status" value="1"/>
</dbReference>
<dbReference type="HAMAP" id="MF_00225">
    <property type="entry name" value="DHO_dh_type2"/>
    <property type="match status" value="1"/>
</dbReference>
<dbReference type="InterPro" id="IPR013785">
    <property type="entry name" value="Aldolase_TIM"/>
</dbReference>
<dbReference type="InterPro" id="IPR050074">
    <property type="entry name" value="DHO_dehydrogenase"/>
</dbReference>
<dbReference type="InterPro" id="IPR012135">
    <property type="entry name" value="Dihydroorotate_DH_1_2"/>
</dbReference>
<dbReference type="InterPro" id="IPR005719">
    <property type="entry name" value="Dihydroorotate_DH_2"/>
</dbReference>
<dbReference type="InterPro" id="IPR005720">
    <property type="entry name" value="Dihydroorotate_DH_cat"/>
</dbReference>
<dbReference type="InterPro" id="IPR001295">
    <property type="entry name" value="Dihydroorotate_DH_CS"/>
</dbReference>
<dbReference type="NCBIfam" id="NF003644">
    <property type="entry name" value="PRK05286.1-1"/>
    <property type="match status" value="1"/>
</dbReference>
<dbReference type="NCBIfam" id="NF003645">
    <property type="entry name" value="PRK05286.1-2"/>
    <property type="match status" value="1"/>
</dbReference>
<dbReference type="NCBIfam" id="NF003646">
    <property type="entry name" value="PRK05286.1-4"/>
    <property type="match status" value="1"/>
</dbReference>
<dbReference type="NCBIfam" id="NF003652">
    <property type="entry name" value="PRK05286.2-5"/>
    <property type="match status" value="1"/>
</dbReference>
<dbReference type="NCBIfam" id="TIGR01036">
    <property type="entry name" value="pyrD_sub2"/>
    <property type="match status" value="1"/>
</dbReference>
<dbReference type="PANTHER" id="PTHR48109:SF4">
    <property type="entry name" value="DIHYDROOROTATE DEHYDROGENASE (QUINONE), MITOCHONDRIAL"/>
    <property type="match status" value="1"/>
</dbReference>
<dbReference type="PANTHER" id="PTHR48109">
    <property type="entry name" value="DIHYDROOROTATE DEHYDROGENASE (QUINONE), MITOCHONDRIAL-RELATED"/>
    <property type="match status" value="1"/>
</dbReference>
<dbReference type="Pfam" id="PF01180">
    <property type="entry name" value="DHO_dh"/>
    <property type="match status" value="1"/>
</dbReference>
<dbReference type="PIRSF" id="PIRSF000164">
    <property type="entry name" value="DHO_oxidase"/>
    <property type="match status" value="1"/>
</dbReference>
<dbReference type="SUPFAM" id="SSF51395">
    <property type="entry name" value="FMN-linked oxidoreductases"/>
    <property type="match status" value="1"/>
</dbReference>
<dbReference type="PROSITE" id="PS00911">
    <property type="entry name" value="DHODEHASE_1"/>
    <property type="match status" value="1"/>
</dbReference>
<dbReference type="PROSITE" id="PS00912">
    <property type="entry name" value="DHODEHASE_2"/>
    <property type="match status" value="1"/>
</dbReference>
<feature type="chain" id="PRO_1000024225" description="Dihydroorotate dehydrogenase (quinone)">
    <location>
        <begin position="1"/>
        <end position="339"/>
    </location>
</feature>
<feature type="active site" description="Nucleophile" evidence="1">
    <location>
        <position position="175"/>
    </location>
</feature>
<feature type="binding site" evidence="1">
    <location>
        <begin position="62"/>
        <end position="66"/>
    </location>
    <ligand>
        <name>FMN</name>
        <dbReference type="ChEBI" id="CHEBI:58210"/>
    </ligand>
</feature>
<feature type="binding site" evidence="1">
    <location>
        <position position="66"/>
    </location>
    <ligand>
        <name>substrate</name>
    </ligand>
</feature>
<feature type="binding site" evidence="1">
    <location>
        <position position="86"/>
    </location>
    <ligand>
        <name>FMN</name>
        <dbReference type="ChEBI" id="CHEBI:58210"/>
    </ligand>
</feature>
<feature type="binding site" evidence="1">
    <location>
        <begin position="111"/>
        <end position="115"/>
    </location>
    <ligand>
        <name>substrate</name>
    </ligand>
</feature>
<feature type="binding site" evidence="1">
    <location>
        <position position="139"/>
    </location>
    <ligand>
        <name>FMN</name>
        <dbReference type="ChEBI" id="CHEBI:58210"/>
    </ligand>
</feature>
<feature type="binding site" evidence="1">
    <location>
        <position position="172"/>
    </location>
    <ligand>
        <name>FMN</name>
        <dbReference type="ChEBI" id="CHEBI:58210"/>
    </ligand>
</feature>
<feature type="binding site" evidence="1">
    <location>
        <position position="172"/>
    </location>
    <ligand>
        <name>substrate</name>
    </ligand>
</feature>
<feature type="binding site" evidence="1">
    <location>
        <position position="177"/>
    </location>
    <ligand>
        <name>substrate</name>
    </ligand>
</feature>
<feature type="binding site" evidence="1">
    <location>
        <position position="217"/>
    </location>
    <ligand>
        <name>FMN</name>
        <dbReference type="ChEBI" id="CHEBI:58210"/>
    </ligand>
</feature>
<feature type="binding site" evidence="1">
    <location>
        <position position="245"/>
    </location>
    <ligand>
        <name>FMN</name>
        <dbReference type="ChEBI" id="CHEBI:58210"/>
    </ligand>
</feature>
<feature type="binding site" evidence="1">
    <location>
        <begin position="246"/>
        <end position="247"/>
    </location>
    <ligand>
        <name>substrate</name>
    </ligand>
</feature>
<feature type="binding site" evidence="1">
    <location>
        <position position="268"/>
    </location>
    <ligand>
        <name>FMN</name>
        <dbReference type="ChEBI" id="CHEBI:58210"/>
    </ligand>
</feature>
<feature type="binding site" evidence="1">
    <location>
        <position position="297"/>
    </location>
    <ligand>
        <name>FMN</name>
        <dbReference type="ChEBI" id="CHEBI:58210"/>
    </ligand>
</feature>
<feature type="binding site" evidence="1">
    <location>
        <begin position="318"/>
        <end position="319"/>
    </location>
    <ligand>
        <name>FMN</name>
        <dbReference type="ChEBI" id="CHEBI:58210"/>
    </ligand>
</feature>
<reference key="1">
    <citation type="submission" date="2007-04" db="EMBL/GenBank/DDBJ databases">
        <title>Complete sequence of Shewanella putrefaciens CN-32.</title>
        <authorList>
            <consortium name="US DOE Joint Genome Institute"/>
            <person name="Copeland A."/>
            <person name="Lucas S."/>
            <person name="Lapidus A."/>
            <person name="Barry K."/>
            <person name="Detter J.C."/>
            <person name="Glavina del Rio T."/>
            <person name="Hammon N."/>
            <person name="Israni S."/>
            <person name="Dalin E."/>
            <person name="Tice H."/>
            <person name="Pitluck S."/>
            <person name="Chain P."/>
            <person name="Malfatti S."/>
            <person name="Shin M."/>
            <person name="Vergez L."/>
            <person name="Schmutz J."/>
            <person name="Larimer F."/>
            <person name="Land M."/>
            <person name="Hauser L."/>
            <person name="Kyrpides N."/>
            <person name="Mikhailova N."/>
            <person name="Romine M.F."/>
            <person name="Fredrickson J."/>
            <person name="Tiedje J."/>
            <person name="Richardson P."/>
        </authorList>
    </citation>
    <scope>NUCLEOTIDE SEQUENCE [LARGE SCALE GENOMIC DNA]</scope>
    <source>
        <strain>CN-32 / ATCC BAA-453</strain>
    </source>
</reference>
<proteinExistence type="inferred from homology"/>
<gene>
    <name evidence="1" type="primary">pyrD</name>
    <name type="ordered locus">Sputcn32_2194</name>
</gene>
<accession>A4Y7I2</accession>
<sequence>MFYKIAQKVMFQMDPERAHNLAIGSLKMTGNSPLNCFYRQTIAPAPVTFMGLTFPNPVGLAAGMDKDGESIDAFHAMGFGHIEVGTVTPRPQPGNDLPRLFRLKPAKGIINRMGFNNKGVDNLVRNLIAKKSDIMVGVNIGKNKDTPVEQGKDDYLICMDKVYPYAAYIAVNISSPNTPGLRSLQYGDLLDELLSAIKTKQLELAEKHKKYVPIALKIAPDLTIEEIENIADALIKNKFDGAIATNTTLTRDGVSGLANANESGGLSGKPLTELSTKVIRQLAACLKGQIPIIGVGGINSAEDALAKFDAGATMVQIYSGFIYQGPKLIKEIVEAYRLK</sequence>
<name>PYRD_SHEPC</name>
<comment type="function">
    <text evidence="1">Catalyzes the conversion of dihydroorotate to orotate with quinone as electron acceptor.</text>
</comment>
<comment type="catalytic activity">
    <reaction evidence="1">
        <text>(S)-dihydroorotate + a quinone = orotate + a quinol</text>
        <dbReference type="Rhea" id="RHEA:30187"/>
        <dbReference type="ChEBI" id="CHEBI:24646"/>
        <dbReference type="ChEBI" id="CHEBI:30839"/>
        <dbReference type="ChEBI" id="CHEBI:30864"/>
        <dbReference type="ChEBI" id="CHEBI:132124"/>
        <dbReference type="EC" id="1.3.5.2"/>
    </reaction>
</comment>
<comment type="cofactor">
    <cofactor evidence="1">
        <name>FMN</name>
        <dbReference type="ChEBI" id="CHEBI:58210"/>
    </cofactor>
    <text evidence="1">Binds 1 FMN per subunit.</text>
</comment>
<comment type="pathway">
    <text evidence="1">Pyrimidine metabolism; UMP biosynthesis via de novo pathway; orotate from (S)-dihydroorotate (quinone route): step 1/1.</text>
</comment>
<comment type="subunit">
    <text evidence="1">Monomer.</text>
</comment>
<comment type="subcellular location">
    <subcellularLocation>
        <location evidence="1">Cell membrane</location>
        <topology evidence="1">Peripheral membrane protein</topology>
    </subcellularLocation>
</comment>
<comment type="similarity">
    <text evidence="1">Belongs to the dihydroorotate dehydrogenase family. Type 2 subfamily.</text>
</comment>
<protein>
    <recommendedName>
        <fullName evidence="1">Dihydroorotate dehydrogenase (quinone)</fullName>
        <ecNumber evidence="1">1.3.5.2</ecNumber>
    </recommendedName>
    <alternativeName>
        <fullName evidence="1">DHOdehase</fullName>
        <shortName evidence="1">DHOD</shortName>
        <shortName evidence="1">DHODase</shortName>
    </alternativeName>
    <alternativeName>
        <fullName evidence="1">Dihydroorotate oxidase</fullName>
    </alternativeName>
</protein>
<evidence type="ECO:0000255" key="1">
    <source>
        <dbReference type="HAMAP-Rule" id="MF_00225"/>
    </source>
</evidence>
<organism>
    <name type="scientific">Shewanella putrefaciens (strain CN-32 / ATCC BAA-453)</name>
    <dbReference type="NCBI Taxonomy" id="319224"/>
    <lineage>
        <taxon>Bacteria</taxon>
        <taxon>Pseudomonadati</taxon>
        <taxon>Pseudomonadota</taxon>
        <taxon>Gammaproteobacteria</taxon>
        <taxon>Alteromonadales</taxon>
        <taxon>Shewanellaceae</taxon>
        <taxon>Shewanella</taxon>
    </lineage>
</organism>